<keyword id="KW-0210">Decarboxylase</keyword>
<keyword id="KW-0456">Lyase</keyword>
<keyword id="KW-0665">Pyrimidine biosynthesis</keyword>
<evidence type="ECO:0000255" key="1">
    <source>
        <dbReference type="HAMAP-Rule" id="MF_01200"/>
    </source>
</evidence>
<proteinExistence type="inferred from homology"/>
<feature type="chain" id="PRO_0000134552" description="Orotidine 5'-phosphate decarboxylase">
    <location>
        <begin position="1"/>
        <end position="233"/>
    </location>
</feature>
<feature type="active site" description="Proton donor" evidence="1">
    <location>
        <position position="60"/>
    </location>
</feature>
<feature type="binding site" evidence="1">
    <location>
        <position position="9"/>
    </location>
    <ligand>
        <name>substrate</name>
    </ligand>
</feature>
<feature type="binding site" evidence="1">
    <location>
        <position position="31"/>
    </location>
    <ligand>
        <name>substrate</name>
    </ligand>
</feature>
<feature type="binding site" evidence="1">
    <location>
        <begin position="58"/>
        <end position="67"/>
    </location>
    <ligand>
        <name>substrate</name>
    </ligand>
</feature>
<feature type="binding site" evidence="1">
    <location>
        <position position="120"/>
    </location>
    <ligand>
        <name>substrate</name>
    </ligand>
</feature>
<feature type="binding site" evidence="1">
    <location>
        <position position="182"/>
    </location>
    <ligand>
        <name>substrate</name>
    </ligand>
</feature>
<feature type="binding site" evidence="1">
    <location>
        <position position="191"/>
    </location>
    <ligand>
        <name>substrate</name>
    </ligand>
</feature>
<feature type="binding site" evidence="1">
    <location>
        <position position="211"/>
    </location>
    <ligand>
        <name>substrate</name>
    </ligand>
</feature>
<feature type="binding site" evidence="1">
    <location>
        <position position="212"/>
    </location>
    <ligand>
        <name>substrate</name>
    </ligand>
</feature>
<gene>
    <name evidence="1" type="primary">pyrF</name>
    <name type="ordered locus">lin1946</name>
</gene>
<organism>
    <name type="scientific">Listeria innocua serovar 6a (strain ATCC BAA-680 / CLIP 11262)</name>
    <dbReference type="NCBI Taxonomy" id="272626"/>
    <lineage>
        <taxon>Bacteria</taxon>
        <taxon>Bacillati</taxon>
        <taxon>Bacillota</taxon>
        <taxon>Bacilli</taxon>
        <taxon>Bacillales</taxon>
        <taxon>Listeriaceae</taxon>
        <taxon>Listeria</taxon>
    </lineage>
</organism>
<reference key="1">
    <citation type="journal article" date="2001" name="Science">
        <title>Comparative genomics of Listeria species.</title>
        <authorList>
            <person name="Glaser P."/>
            <person name="Frangeul L."/>
            <person name="Buchrieser C."/>
            <person name="Rusniok C."/>
            <person name="Amend A."/>
            <person name="Baquero F."/>
            <person name="Berche P."/>
            <person name="Bloecker H."/>
            <person name="Brandt P."/>
            <person name="Chakraborty T."/>
            <person name="Charbit A."/>
            <person name="Chetouani F."/>
            <person name="Couve E."/>
            <person name="de Daruvar A."/>
            <person name="Dehoux P."/>
            <person name="Domann E."/>
            <person name="Dominguez-Bernal G."/>
            <person name="Duchaud E."/>
            <person name="Durant L."/>
            <person name="Dussurget O."/>
            <person name="Entian K.-D."/>
            <person name="Fsihi H."/>
            <person name="Garcia-del Portillo F."/>
            <person name="Garrido P."/>
            <person name="Gautier L."/>
            <person name="Goebel W."/>
            <person name="Gomez-Lopez N."/>
            <person name="Hain T."/>
            <person name="Hauf J."/>
            <person name="Jackson D."/>
            <person name="Jones L.-M."/>
            <person name="Kaerst U."/>
            <person name="Kreft J."/>
            <person name="Kuhn M."/>
            <person name="Kunst F."/>
            <person name="Kurapkat G."/>
            <person name="Madueno E."/>
            <person name="Maitournam A."/>
            <person name="Mata Vicente J."/>
            <person name="Ng E."/>
            <person name="Nedjari H."/>
            <person name="Nordsiek G."/>
            <person name="Novella S."/>
            <person name="de Pablos B."/>
            <person name="Perez-Diaz J.-C."/>
            <person name="Purcell R."/>
            <person name="Remmel B."/>
            <person name="Rose M."/>
            <person name="Schlueter T."/>
            <person name="Simoes N."/>
            <person name="Tierrez A."/>
            <person name="Vazquez-Boland J.-A."/>
            <person name="Voss H."/>
            <person name="Wehland J."/>
            <person name="Cossart P."/>
        </authorList>
    </citation>
    <scope>NUCLEOTIDE SEQUENCE [LARGE SCALE GENOMIC DNA]</scope>
    <source>
        <strain>ATCC BAA-680 / CLIP 11262</strain>
    </source>
</reference>
<accession>Q92AH6</accession>
<name>PYRF_LISIN</name>
<comment type="function">
    <text evidence="1">Catalyzes the decarboxylation of orotidine 5'-monophosphate (OMP) to uridine 5'-monophosphate (UMP).</text>
</comment>
<comment type="catalytic activity">
    <reaction evidence="1">
        <text>orotidine 5'-phosphate + H(+) = UMP + CO2</text>
        <dbReference type="Rhea" id="RHEA:11596"/>
        <dbReference type="ChEBI" id="CHEBI:15378"/>
        <dbReference type="ChEBI" id="CHEBI:16526"/>
        <dbReference type="ChEBI" id="CHEBI:57538"/>
        <dbReference type="ChEBI" id="CHEBI:57865"/>
        <dbReference type="EC" id="4.1.1.23"/>
    </reaction>
</comment>
<comment type="pathway">
    <text evidence="1">Pyrimidine metabolism; UMP biosynthesis via de novo pathway; UMP from orotate: step 2/2.</text>
</comment>
<comment type="subunit">
    <text evidence="1">Homodimer.</text>
</comment>
<comment type="similarity">
    <text evidence="1">Belongs to the OMP decarboxylase family. Type 1 subfamily.</text>
</comment>
<sequence length="233" mass="25244">MNKPIIALDFQTYQEVEAFLAQFSGESLSVKVGMELFYSNGPAIVEKIKQQNHAIFLDLKLHDIPNTVKSAMIGLAKLGVDMVNVHASGGKKMMEAAREGLEIGSTSGKRPKLIAVTQLTSTSETDMQKEQLVKASLLESVLHYSDLTKQAGLDGVVCSALEADEIKLQNGSDFLRVTPGIRLASDATDDQIRVVTPEKARSIGSSNIVVGRSITRANDPVAAYNQVLKEWNA</sequence>
<protein>
    <recommendedName>
        <fullName evidence="1">Orotidine 5'-phosphate decarboxylase</fullName>
        <ecNumber evidence="1">4.1.1.23</ecNumber>
    </recommendedName>
    <alternativeName>
        <fullName evidence="1">OMP decarboxylase</fullName>
        <shortName evidence="1">OMPDCase</shortName>
        <shortName evidence="1">OMPdecase</shortName>
    </alternativeName>
</protein>
<dbReference type="EC" id="4.1.1.23" evidence="1"/>
<dbReference type="EMBL" id="AL596170">
    <property type="protein sequence ID" value="CAC97176.1"/>
    <property type="molecule type" value="Genomic_DNA"/>
</dbReference>
<dbReference type="PIR" id="AH1675">
    <property type="entry name" value="AH1675"/>
</dbReference>
<dbReference type="RefSeq" id="WP_010991028.1">
    <property type="nucleotide sequence ID" value="NC_003212.1"/>
</dbReference>
<dbReference type="SMR" id="Q92AH6"/>
<dbReference type="STRING" id="272626.gene:17566304"/>
<dbReference type="GeneID" id="93235284"/>
<dbReference type="KEGG" id="lin:pyrF"/>
<dbReference type="eggNOG" id="COG0284">
    <property type="taxonomic scope" value="Bacteria"/>
</dbReference>
<dbReference type="HOGENOM" id="CLU_067069_1_1_9"/>
<dbReference type="OrthoDB" id="9806203at2"/>
<dbReference type="UniPathway" id="UPA00070">
    <property type="reaction ID" value="UER00120"/>
</dbReference>
<dbReference type="Proteomes" id="UP000002513">
    <property type="component" value="Chromosome"/>
</dbReference>
<dbReference type="GO" id="GO:0005829">
    <property type="term" value="C:cytosol"/>
    <property type="evidence" value="ECO:0007669"/>
    <property type="project" value="TreeGrafter"/>
</dbReference>
<dbReference type="GO" id="GO:0004590">
    <property type="term" value="F:orotidine-5'-phosphate decarboxylase activity"/>
    <property type="evidence" value="ECO:0007669"/>
    <property type="project" value="UniProtKB-UniRule"/>
</dbReference>
<dbReference type="GO" id="GO:0006207">
    <property type="term" value="P:'de novo' pyrimidine nucleobase biosynthetic process"/>
    <property type="evidence" value="ECO:0007669"/>
    <property type="project" value="InterPro"/>
</dbReference>
<dbReference type="GO" id="GO:0044205">
    <property type="term" value="P:'de novo' UMP biosynthetic process"/>
    <property type="evidence" value="ECO:0007669"/>
    <property type="project" value="UniProtKB-UniRule"/>
</dbReference>
<dbReference type="CDD" id="cd04725">
    <property type="entry name" value="OMP_decarboxylase_like"/>
    <property type="match status" value="1"/>
</dbReference>
<dbReference type="FunFam" id="3.20.20.70:FF:000015">
    <property type="entry name" value="Orotidine 5'-phosphate decarboxylase"/>
    <property type="match status" value="1"/>
</dbReference>
<dbReference type="Gene3D" id="3.20.20.70">
    <property type="entry name" value="Aldolase class I"/>
    <property type="match status" value="1"/>
</dbReference>
<dbReference type="HAMAP" id="MF_01200_B">
    <property type="entry name" value="OMPdecase_type1_B"/>
    <property type="match status" value="1"/>
</dbReference>
<dbReference type="InterPro" id="IPR013785">
    <property type="entry name" value="Aldolase_TIM"/>
</dbReference>
<dbReference type="InterPro" id="IPR014732">
    <property type="entry name" value="OMPdecase"/>
</dbReference>
<dbReference type="InterPro" id="IPR018089">
    <property type="entry name" value="OMPdecase_AS"/>
</dbReference>
<dbReference type="InterPro" id="IPR047596">
    <property type="entry name" value="OMPdecase_bac"/>
</dbReference>
<dbReference type="InterPro" id="IPR001754">
    <property type="entry name" value="OMPdeCOase_dom"/>
</dbReference>
<dbReference type="InterPro" id="IPR011060">
    <property type="entry name" value="RibuloseP-bd_barrel"/>
</dbReference>
<dbReference type="NCBIfam" id="NF001273">
    <property type="entry name" value="PRK00230.1"/>
    <property type="match status" value="1"/>
</dbReference>
<dbReference type="NCBIfam" id="TIGR01740">
    <property type="entry name" value="pyrF"/>
    <property type="match status" value="1"/>
</dbReference>
<dbReference type="PANTHER" id="PTHR32119">
    <property type="entry name" value="OROTIDINE 5'-PHOSPHATE DECARBOXYLASE"/>
    <property type="match status" value="1"/>
</dbReference>
<dbReference type="PANTHER" id="PTHR32119:SF2">
    <property type="entry name" value="OROTIDINE 5'-PHOSPHATE DECARBOXYLASE"/>
    <property type="match status" value="1"/>
</dbReference>
<dbReference type="Pfam" id="PF00215">
    <property type="entry name" value="OMPdecase"/>
    <property type="match status" value="1"/>
</dbReference>
<dbReference type="SMART" id="SM00934">
    <property type="entry name" value="OMPdecase"/>
    <property type="match status" value="1"/>
</dbReference>
<dbReference type="SUPFAM" id="SSF51366">
    <property type="entry name" value="Ribulose-phoshate binding barrel"/>
    <property type="match status" value="1"/>
</dbReference>
<dbReference type="PROSITE" id="PS00156">
    <property type="entry name" value="OMPDECASE"/>
    <property type="match status" value="1"/>
</dbReference>